<accession>Q864F4</accession>
<dbReference type="EMBL" id="AY205143">
    <property type="protein sequence ID" value="AAP31017.1"/>
    <property type="molecule type" value="Genomic_DNA"/>
</dbReference>
<dbReference type="SMR" id="Q864F4"/>
<dbReference type="GlyCosmos" id="Q864F4">
    <property type="glycosylation" value="1 site, No reported glycans"/>
</dbReference>
<dbReference type="GO" id="GO:0005886">
    <property type="term" value="C:plasma membrane"/>
    <property type="evidence" value="ECO:0000250"/>
    <property type="project" value="UniProtKB"/>
</dbReference>
<dbReference type="GO" id="GO:0004980">
    <property type="term" value="F:melanocyte-stimulating hormone receptor activity"/>
    <property type="evidence" value="ECO:0007669"/>
    <property type="project" value="InterPro"/>
</dbReference>
<dbReference type="GO" id="GO:0007189">
    <property type="term" value="P:adenylate cyclase-activating G protein-coupled receptor signaling pathway"/>
    <property type="evidence" value="ECO:0007669"/>
    <property type="project" value="UniProtKB-ARBA"/>
</dbReference>
<dbReference type="FunFam" id="1.20.1070.10:FF:000211">
    <property type="entry name" value="Melanocyte-stimulating hormone receptor"/>
    <property type="match status" value="1"/>
</dbReference>
<dbReference type="Gene3D" id="1.20.1070.10">
    <property type="entry name" value="Rhodopsin 7-helix transmembrane proteins"/>
    <property type="match status" value="1"/>
</dbReference>
<dbReference type="InterPro" id="IPR000276">
    <property type="entry name" value="GPCR_Rhodpsn"/>
</dbReference>
<dbReference type="InterPro" id="IPR017452">
    <property type="entry name" value="GPCR_Rhodpsn_7TM"/>
</dbReference>
<dbReference type="InterPro" id="IPR001671">
    <property type="entry name" value="Melcrt_ACTH_rcpt"/>
</dbReference>
<dbReference type="InterPro" id="IPR000761">
    <property type="entry name" value="MSH_rcpt"/>
</dbReference>
<dbReference type="PANTHER" id="PTHR22750">
    <property type="entry name" value="G-PROTEIN COUPLED RECEPTOR"/>
    <property type="match status" value="1"/>
</dbReference>
<dbReference type="Pfam" id="PF00001">
    <property type="entry name" value="7tm_1"/>
    <property type="match status" value="1"/>
</dbReference>
<dbReference type="PRINTS" id="PR00237">
    <property type="entry name" value="GPCRRHODOPSN"/>
</dbReference>
<dbReference type="PRINTS" id="PR00534">
    <property type="entry name" value="MCRFAMILY"/>
</dbReference>
<dbReference type="PRINTS" id="PR00536">
    <property type="entry name" value="MELNOCYTESHR"/>
</dbReference>
<dbReference type="SMART" id="SM01381">
    <property type="entry name" value="7TM_GPCR_Srsx"/>
    <property type="match status" value="1"/>
</dbReference>
<dbReference type="SUPFAM" id="SSF81321">
    <property type="entry name" value="Family A G protein-coupled receptor-like"/>
    <property type="match status" value="1"/>
</dbReference>
<dbReference type="PROSITE" id="PS00237">
    <property type="entry name" value="G_PROTEIN_RECEP_F1_1"/>
    <property type="match status" value="1"/>
</dbReference>
<dbReference type="PROSITE" id="PS50262">
    <property type="entry name" value="G_PROTEIN_RECEP_F1_2"/>
    <property type="match status" value="1"/>
</dbReference>
<evidence type="ECO:0000250" key="1">
    <source>
        <dbReference type="UniProtKB" id="Q01726"/>
    </source>
</evidence>
<evidence type="ECO:0000255" key="2"/>
<evidence type="ECO:0000255" key="3">
    <source>
        <dbReference type="PROSITE-ProRule" id="PRU00521"/>
    </source>
</evidence>
<evidence type="ECO:0000256" key="4">
    <source>
        <dbReference type="SAM" id="MobiDB-lite"/>
    </source>
</evidence>
<proteinExistence type="inferred from homology"/>
<comment type="function">
    <text evidence="1">Receptor for MSH (alpha, beta and gamma) and ACTH. The activity of this receptor is mediated by G proteins which activate adenylate cyclase. Mediates melanogenesis, the production of eumelanin (black/brown) and phaeomelanin (red/yellow), via regulation of cAMP signaling in melanocytes.</text>
</comment>
<comment type="subunit">
    <text evidence="1">Interacts with MGRN1, but does not undergo MGRN1-mediated ubiquitination; this interaction competes with GNAS-binding and thus inhibits agonist-induced cAMP production. Interacts with OPN3; the interaction results in a decrease in MC1R-mediated cAMP signaling and ultimately a decrease in melanin production in melanocytes.</text>
</comment>
<comment type="subcellular location">
    <subcellularLocation>
        <location evidence="1">Cell membrane</location>
        <topology evidence="2">Multi-pass membrane protein</topology>
    </subcellularLocation>
</comment>
<comment type="similarity">
    <text evidence="3">Belongs to the G-protein coupled receptor 1 family.</text>
</comment>
<reference key="1">
    <citation type="journal article" date="2003" name="Am. J. Phys. Anthropol.">
        <title>Evolution of a pigmentation gene, the melanocortin-1 receptor, in primates.</title>
        <authorList>
            <person name="Mundy N.I."/>
            <person name="Kelly J."/>
        </authorList>
    </citation>
    <scope>NUCLEOTIDE SEQUENCE [GENOMIC DNA]</scope>
    <source>
        <strain>Isolate 3</strain>
    </source>
</reference>
<name>MSHR_LEMCA</name>
<gene>
    <name type="primary">MC1R</name>
</gene>
<sequence>MPVQGSQRSLLGAVNSTPTATPHLRPAANQTGPQCLEVSIPDGLFLCLGLVSLVENTLVVAAIAKNRNLHSPMYCFICCLALSDLLVSVSSVLETAVLLLLGAGALAAQATVVQQLGNVIDVLLCSSMVSSLFFLGAIAMDRYISIFYALRYHSIVTLARARRAIAAIWAASILSSTLFIAYCDRTAALLCLVVFFLAMLVLMAVLYVHMLTQARQHAQGIARLHKRQRPVQQGWGLKGAATLTILLGVFFLCWGPFFLHLTLIAVCPQHPTCSCIFKNFRLFLALIVCNAIVDPLIYAFRSQELRKTLKEVLLFFW</sequence>
<organism>
    <name type="scientific">Lemur catta</name>
    <name type="common">Ring-tailed lemur</name>
    <dbReference type="NCBI Taxonomy" id="9447"/>
    <lineage>
        <taxon>Eukaryota</taxon>
        <taxon>Metazoa</taxon>
        <taxon>Chordata</taxon>
        <taxon>Craniata</taxon>
        <taxon>Vertebrata</taxon>
        <taxon>Euteleostomi</taxon>
        <taxon>Mammalia</taxon>
        <taxon>Eutheria</taxon>
        <taxon>Euarchontoglires</taxon>
        <taxon>Primates</taxon>
        <taxon>Strepsirrhini</taxon>
        <taxon>Lemuriformes</taxon>
        <taxon>Lemuridae</taxon>
        <taxon>Lemur</taxon>
    </lineage>
</organism>
<protein>
    <recommendedName>
        <fullName>Melanocyte-stimulating hormone receptor</fullName>
        <shortName>MSH-R</shortName>
    </recommendedName>
    <alternativeName>
        <fullName>Melanocortin receptor 1</fullName>
        <shortName>MC1-R</shortName>
    </alternativeName>
</protein>
<feature type="chain" id="PRO_0000069822" description="Melanocyte-stimulating hormone receptor">
    <location>
        <begin position="1"/>
        <end position="317"/>
    </location>
</feature>
<feature type="topological domain" description="Extracellular" evidence="2">
    <location>
        <begin position="1"/>
        <end position="37"/>
    </location>
</feature>
<feature type="transmembrane region" description="Helical; Name=1" evidence="2">
    <location>
        <begin position="38"/>
        <end position="63"/>
    </location>
</feature>
<feature type="topological domain" description="Cytoplasmic" evidence="2">
    <location>
        <begin position="64"/>
        <end position="72"/>
    </location>
</feature>
<feature type="transmembrane region" description="Helical; Name=2" evidence="2">
    <location>
        <begin position="73"/>
        <end position="93"/>
    </location>
</feature>
<feature type="topological domain" description="Extracellular" evidence="2">
    <location>
        <begin position="94"/>
        <end position="118"/>
    </location>
</feature>
<feature type="transmembrane region" description="Helical; Name=3" evidence="2">
    <location>
        <begin position="119"/>
        <end position="140"/>
    </location>
</feature>
<feature type="topological domain" description="Cytoplasmic" evidence="2">
    <location>
        <begin position="141"/>
        <end position="163"/>
    </location>
</feature>
<feature type="transmembrane region" description="Helical; Name=4" evidence="2">
    <location>
        <begin position="164"/>
        <end position="183"/>
    </location>
</feature>
<feature type="topological domain" description="Extracellular" evidence="2">
    <location>
        <begin position="184"/>
        <end position="191"/>
    </location>
</feature>
<feature type="transmembrane region" description="Helical; Name=5" evidence="2">
    <location>
        <begin position="192"/>
        <end position="211"/>
    </location>
</feature>
<feature type="topological domain" description="Cytoplasmic" evidence="2">
    <location>
        <begin position="212"/>
        <end position="240"/>
    </location>
</feature>
<feature type="transmembrane region" description="Helical; Name=6" evidence="2">
    <location>
        <begin position="241"/>
        <end position="266"/>
    </location>
</feature>
<feature type="topological domain" description="Extracellular" evidence="2">
    <location>
        <begin position="267"/>
        <end position="279"/>
    </location>
</feature>
<feature type="transmembrane region" description="Helical; Name=7" evidence="2">
    <location>
        <begin position="280"/>
        <end position="300"/>
    </location>
</feature>
<feature type="topological domain" description="Cytoplasmic" evidence="2">
    <location>
        <begin position="301"/>
        <end position="317"/>
    </location>
</feature>
<feature type="region of interest" description="Disordered" evidence="4">
    <location>
        <begin position="1"/>
        <end position="23"/>
    </location>
</feature>
<feature type="compositionally biased region" description="Polar residues" evidence="4">
    <location>
        <begin position="1"/>
        <end position="20"/>
    </location>
</feature>
<feature type="glycosylation site" description="N-linked (GlcNAc...) asparagine" evidence="2">
    <location>
        <position position="29"/>
    </location>
</feature>
<keyword id="KW-1003">Cell membrane</keyword>
<keyword id="KW-0297">G-protein coupled receptor</keyword>
<keyword id="KW-0325">Glycoprotein</keyword>
<keyword id="KW-0472">Membrane</keyword>
<keyword id="KW-0675">Receptor</keyword>
<keyword id="KW-0807">Transducer</keyword>
<keyword id="KW-0812">Transmembrane</keyword>
<keyword id="KW-1133">Transmembrane helix</keyword>